<protein>
    <recommendedName>
        <fullName evidence="6">Probable histidine kinase 1</fullName>
        <shortName evidence="6">OsHK1</shortName>
        <ecNumber evidence="6">2.7.13.3</ecNumber>
    </recommendedName>
</protein>
<comment type="function">
    <text evidence="1">Cytokinin receptor related to bacterial two-component regulators. Functions as a histidine kinase and transmits the stress signal to a downstream MAPK cascade.</text>
</comment>
<comment type="catalytic activity">
    <reaction evidence="6">
        <text>ATP + protein L-histidine = ADP + protein N-phospho-L-histidine.</text>
        <dbReference type="EC" id="2.7.13.3"/>
    </reaction>
</comment>
<comment type="domain">
    <text evidence="6">Histidine-containing phosphotransfer domain (HPt) contains an active histidine that mediates the phosphotransfer.</text>
</comment>
<comment type="PTM">
    <text evidence="6">Activation probably requires a transfer of a phosphate group between a His in the transmitter domain and an Asp of the receiver domain.</text>
</comment>
<reference key="1">
    <citation type="journal article" date="2005" name="PLoS Biol.">
        <title>The genomes of Oryza sativa: a history of duplications.</title>
        <authorList>
            <person name="Yu J."/>
            <person name="Wang J."/>
            <person name="Lin W."/>
            <person name="Li S."/>
            <person name="Li H."/>
            <person name="Zhou J."/>
            <person name="Ni P."/>
            <person name="Dong W."/>
            <person name="Hu S."/>
            <person name="Zeng C."/>
            <person name="Zhang J."/>
            <person name="Zhang Y."/>
            <person name="Li R."/>
            <person name="Xu Z."/>
            <person name="Li S."/>
            <person name="Li X."/>
            <person name="Zheng H."/>
            <person name="Cong L."/>
            <person name="Lin L."/>
            <person name="Yin J."/>
            <person name="Geng J."/>
            <person name="Li G."/>
            <person name="Shi J."/>
            <person name="Liu J."/>
            <person name="Lv H."/>
            <person name="Li J."/>
            <person name="Wang J."/>
            <person name="Deng Y."/>
            <person name="Ran L."/>
            <person name="Shi X."/>
            <person name="Wang X."/>
            <person name="Wu Q."/>
            <person name="Li C."/>
            <person name="Ren X."/>
            <person name="Wang J."/>
            <person name="Wang X."/>
            <person name="Li D."/>
            <person name="Liu D."/>
            <person name="Zhang X."/>
            <person name="Ji Z."/>
            <person name="Zhao W."/>
            <person name="Sun Y."/>
            <person name="Zhang Z."/>
            <person name="Bao J."/>
            <person name="Han Y."/>
            <person name="Dong L."/>
            <person name="Ji J."/>
            <person name="Chen P."/>
            <person name="Wu S."/>
            <person name="Liu J."/>
            <person name="Xiao Y."/>
            <person name="Bu D."/>
            <person name="Tan J."/>
            <person name="Yang L."/>
            <person name="Ye C."/>
            <person name="Zhang J."/>
            <person name="Xu J."/>
            <person name="Zhou Y."/>
            <person name="Yu Y."/>
            <person name="Zhang B."/>
            <person name="Zhuang S."/>
            <person name="Wei H."/>
            <person name="Liu B."/>
            <person name="Lei M."/>
            <person name="Yu H."/>
            <person name="Li Y."/>
            <person name="Xu H."/>
            <person name="Wei S."/>
            <person name="He X."/>
            <person name="Fang L."/>
            <person name="Zhang Z."/>
            <person name="Zhang Y."/>
            <person name="Huang X."/>
            <person name="Su Z."/>
            <person name="Tong W."/>
            <person name="Li J."/>
            <person name="Tong Z."/>
            <person name="Li S."/>
            <person name="Ye J."/>
            <person name="Wang L."/>
            <person name="Fang L."/>
            <person name="Lei T."/>
            <person name="Chen C.-S."/>
            <person name="Chen H.-C."/>
            <person name="Xu Z."/>
            <person name="Li H."/>
            <person name="Huang H."/>
            <person name="Zhang F."/>
            <person name="Xu H."/>
            <person name="Li N."/>
            <person name="Zhao C."/>
            <person name="Li S."/>
            <person name="Dong L."/>
            <person name="Huang Y."/>
            <person name="Li L."/>
            <person name="Xi Y."/>
            <person name="Qi Q."/>
            <person name="Li W."/>
            <person name="Zhang B."/>
            <person name="Hu W."/>
            <person name="Zhang Y."/>
            <person name="Tian X."/>
            <person name="Jiao Y."/>
            <person name="Liang X."/>
            <person name="Jin J."/>
            <person name="Gao L."/>
            <person name="Zheng W."/>
            <person name="Hao B."/>
            <person name="Liu S.-M."/>
            <person name="Wang W."/>
            <person name="Yuan L."/>
            <person name="Cao M."/>
            <person name="McDermott J."/>
            <person name="Samudrala R."/>
            <person name="Wang J."/>
            <person name="Wong G.K.-S."/>
            <person name="Yang H."/>
        </authorList>
    </citation>
    <scope>NUCLEOTIDE SEQUENCE [LARGE SCALE GENOMIC DNA]</scope>
    <source>
        <strain>cv. 93-11</strain>
    </source>
</reference>
<dbReference type="EC" id="2.7.13.3" evidence="6"/>
<dbReference type="EMBL" id="CM000131">
    <property type="protein sequence ID" value="EAZ01927.1"/>
    <property type="molecule type" value="Genomic_DNA"/>
</dbReference>
<dbReference type="SMR" id="A2YFR6"/>
<dbReference type="STRING" id="39946.A2YFR6"/>
<dbReference type="EnsemblPlants" id="BGIOSGA023392-TA">
    <property type="protein sequence ID" value="BGIOSGA023392-PA"/>
    <property type="gene ID" value="BGIOSGA023392"/>
</dbReference>
<dbReference type="EnsemblPlants" id="OsGoSa_06g0024340.01">
    <property type="protein sequence ID" value="OsGoSa_06g0024340.01"/>
    <property type="gene ID" value="OsGoSa_06g0024340"/>
</dbReference>
<dbReference type="EnsemblPlants" id="OsIR64_06g0024270.01">
    <property type="protein sequence ID" value="OsIR64_06g0024270.01"/>
    <property type="gene ID" value="OsIR64_06g0024270"/>
</dbReference>
<dbReference type="EnsemblPlants" id="OsKYG_06g0024660.01">
    <property type="protein sequence ID" value="OsKYG_06g0024660.01"/>
    <property type="gene ID" value="OsKYG_06g0024660"/>
</dbReference>
<dbReference type="EnsemblPlants" id="OsLaMu_06g0024570.01">
    <property type="protein sequence ID" value="OsLaMu_06g0024570.01"/>
    <property type="gene ID" value="OsLaMu_06g0024570"/>
</dbReference>
<dbReference type="EnsemblPlants" id="OsLiXu_06g0024930.01">
    <property type="protein sequence ID" value="OsLiXu_06g0024930.01"/>
    <property type="gene ID" value="OsLiXu_06g0024930"/>
</dbReference>
<dbReference type="EnsemblPlants" id="OsMH63_06G024660_01">
    <property type="protein sequence ID" value="OsMH63_06G024660_01"/>
    <property type="gene ID" value="OsMH63_06G024660"/>
</dbReference>
<dbReference type="EnsemblPlants" id="OsPr106_06g0024760.01">
    <property type="protein sequence ID" value="OsPr106_06g0024760.01"/>
    <property type="gene ID" value="OsPr106_06g0024760"/>
</dbReference>
<dbReference type="EnsemblPlants" id="OsZS97_06G024820_01">
    <property type="protein sequence ID" value="OsZS97_06G024820_01"/>
    <property type="gene ID" value="OsZS97_06G024820"/>
</dbReference>
<dbReference type="Gramene" id="BGIOSGA023392-TA">
    <property type="protein sequence ID" value="BGIOSGA023392-PA"/>
    <property type="gene ID" value="BGIOSGA023392"/>
</dbReference>
<dbReference type="Gramene" id="OsGoSa_06g0024340.01">
    <property type="protein sequence ID" value="OsGoSa_06g0024340.01"/>
    <property type="gene ID" value="OsGoSa_06g0024340"/>
</dbReference>
<dbReference type="Gramene" id="OsIR64_06g0024270.01">
    <property type="protein sequence ID" value="OsIR64_06g0024270.01"/>
    <property type="gene ID" value="OsIR64_06g0024270"/>
</dbReference>
<dbReference type="Gramene" id="OsKYG_06g0024660.01">
    <property type="protein sequence ID" value="OsKYG_06g0024660.01"/>
    <property type="gene ID" value="OsKYG_06g0024660"/>
</dbReference>
<dbReference type="Gramene" id="OsLaMu_06g0024570.01">
    <property type="protein sequence ID" value="OsLaMu_06g0024570.01"/>
    <property type="gene ID" value="OsLaMu_06g0024570"/>
</dbReference>
<dbReference type="Gramene" id="OsLiXu_06g0024930.01">
    <property type="protein sequence ID" value="OsLiXu_06g0024930.01"/>
    <property type="gene ID" value="OsLiXu_06g0024930"/>
</dbReference>
<dbReference type="Gramene" id="OsMH63_06G024660_01">
    <property type="protein sequence ID" value="OsMH63_06G024660_01"/>
    <property type="gene ID" value="OsMH63_06G024660"/>
</dbReference>
<dbReference type="Gramene" id="OsPr106_06g0024760.01">
    <property type="protein sequence ID" value="OsPr106_06g0024760.01"/>
    <property type="gene ID" value="OsPr106_06g0024760"/>
</dbReference>
<dbReference type="Gramene" id="OsZS97_06G024820_01">
    <property type="protein sequence ID" value="OsZS97_06G024820_01"/>
    <property type="gene ID" value="OsZS97_06G024820"/>
</dbReference>
<dbReference type="HOGENOM" id="CLU_000445_104_17_1"/>
<dbReference type="OMA" id="HEDACQT"/>
<dbReference type="OrthoDB" id="10266508at2759"/>
<dbReference type="Proteomes" id="UP000007015">
    <property type="component" value="Chromosome 6"/>
</dbReference>
<dbReference type="GO" id="GO:0005886">
    <property type="term" value="C:plasma membrane"/>
    <property type="evidence" value="ECO:0007669"/>
    <property type="project" value="TreeGrafter"/>
</dbReference>
<dbReference type="GO" id="GO:0009927">
    <property type="term" value="F:histidine phosphotransfer kinase activity"/>
    <property type="evidence" value="ECO:0007669"/>
    <property type="project" value="TreeGrafter"/>
</dbReference>
<dbReference type="GO" id="GO:0000155">
    <property type="term" value="F:phosphorelay sensor kinase activity"/>
    <property type="evidence" value="ECO:0007669"/>
    <property type="project" value="InterPro"/>
</dbReference>
<dbReference type="GO" id="GO:0009736">
    <property type="term" value="P:cytokinin-activated signaling pathway"/>
    <property type="evidence" value="ECO:0007669"/>
    <property type="project" value="UniProtKB-KW"/>
</dbReference>
<dbReference type="CDD" id="cd16922">
    <property type="entry name" value="HATPase_EvgS-ArcB-TorS-like"/>
    <property type="match status" value="1"/>
</dbReference>
<dbReference type="CDD" id="cd00082">
    <property type="entry name" value="HisKA"/>
    <property type="match status" value="1"/>
</dbReference>
<dbReference type="CDD" id="cd17546">
    <property type="entry name" value="REC_hyHK_CKI1_RcsC-like"/>
    <property type="match status" value="1"/>
</dbReference>
<dbReference type="FunFam" id="3.30.450.20:FF:000061">
    <property type="entry name" value="Histidine kinase 5"/>
    <property type="match status" value="1"/>
</dbReference>
<dbReference type="FunFam" id="3.40.50.2300:FF:000201">
    <property type="entry name" value="Histidine kinase 5"/>
    <property type="match status" value="1"/>
</dbReference>
<dbReference type="FunFam" id="1.10.287.130:FF:000069">
    <property type="entry name" value="Probable histidine kinase 1"/>
    <property type="match status" value="1"/>
</dbReference>
<dbReference type="FunFam" id="3.30.565.10:FF:000069">
    <property type="entry name" value="Probable histidine kinase 1"/>
    <property type="match status" value="1"/>
</dbReference>
<dbReference type="Gene3D" id="1.10.287.130">
    <property type="match status" value="1"/>
</dbReference>
<dbReference type="Gene3D" id="3.40.50.2300">
    <property type="match status" value="1"/>
</dbReference>
<dbReference type="Gene3D" id="3.30.565.10">
    <property type="entry name" value="Histidine kinase-like ATPase, C-terminal domain"/>
    <property type="match status" value="1"/>
</dbReference>
<dbReference type="Gene3D" id="3.30.450.20">
    <property type="entry name" value="PAS domain"/>
    <property type="match status" value="1"/>
</dbReference>
<dbReference type="InterPro" id="IPR011006">
    <property type="entry name" value="CheY-like_superfamily"/>
</dbReference>
<dbReference type="InterPro" id="IPR036890">
    <property type="entry name" value="HATPase_C_sf"/>
</dbReference>
<dbReference type="InterPro" id="IPR005467">
    <property type="entry name" value="His_kinase_dom"/>
</dbReference>
<dbReference type="InterPro" id="IPR003661">
    <property type="entry name" value="HisK_dim/P_dom"/>
</dbReference>
<dbReference type="InterPro" id="IPR036097">
    <property type="entry name" value="HisK_dim/P_sf"/>
</dbReference>
<dbReference type="InterPro" id="IPR035965">
    <property type="entry name" value="PAS-like_dom_sf"/>
</dbReference>
<dbReference type="InterPro" id="IPR004358">
    <property type="entry name" value="Sig_transdc_His_kin-like_C"/>
</dbReference>
<dbReference type="InterPro" id="IPR001789">
    <property type="entry name" value="Sig_transdc_resp-reg_receiver"/>
</dbReference>
<dbReference type="PANTHER" id="PTHR43047:SF68">
    <property type="entry name" value="HISTIDINE KINASE 5"/>
    <property type="match status" value="1"/>
</dbReference>
<dbReference type="PANTHER" id="PTHR43047">
    <property type="entry name" value="TWO-COMPONENT HISTIDINE PROTEIN KINASE"/>
    <property type="match status" value="1"/>
</dbReference>
<dbReference type="Pfam" id="PF02518">
    <property type="entry name" value="HATPase_c"/>
    <property type="match status" value="1"/>
</dbReference>
<dbReference type="Pfam" id="PF00512">
    <property type="entry name" value="HisKA"/>
    <property type="match status" value="1"/>
</dbReference>
<dbReference type="Pfam" id="PF00072">
    <property type="entry name" value="Response_reg"/>
    <property type="match status" value="2"/>
</dbReference>
<dbReference type="PRINTS" id="PR00344">
    <property type="entry name" value="BCTRLSENSOR"/>
</dbReference>
<dbReference type="SMART" id="SM00387">
    <property type="entry name" value="HATPase_c"/>
    <property type="match status" value="1"/>
</dbReference>
<dbReference type="SMART" id="SM00388">
    <property type="entry name" value="HisKA"/>
    <property type="match status" value="1"/>
</dbReference>
<dbReference type="SMART" id="SM00448">
    <property type="entry name" value="REC"/>
    <property type="match status" value="1"/>
</dbReference>
<dbReference type="SUPFAM" id="SSF55874">
    <property type="entry name" value="ATPase domain of HSP90 chaperone/DNA topoisomerase II/histidine kinase"/>
    <property type="match status" value="1"/>
</dbReference>
<dbReference type="SUPFAM" id="SSF52172">
    <property type="entry name" value="CheY-like"/>
    <property type="match status" value="1"/>
</dbReference>
<dbReference type="SUPFAM" id="SSF47384">
    <property type="entry name" value="Homodimeric domain of signal transducing histidine kinase"/>
    <property type="match status" value="1"/>
</dbReference>
<dbReference type="SUPFAM" id="SSF55785">
    <property type="entry name" value="PYP-like sensor domain (PAS domain)"/>
    <property type="match status" value="1"/>
</dbReference>
<dbReference type="PROSITE" id="PS50109">
    <property type="entry name" value="HIS_KIN"/>
    <property type="match status" value="1"/>
</dbReference>
<dbReference type="PROSITE" id="PS50110">
    <property type="entry name" value="RESPONSE_REGULATORY"/>
    <property type="match status" value="1"/>
</dbReference>
<keyword id="KW-0175">Coiled coil</keyword>
<keyword id="KW-0932">Cytokinin signaling pathway</keyword>
<keyword id="KW-0418">Kinase</keyword>
<keyword id="KW-0597">Phosphoprotein</keyword>
<keyword id="KW-1185">Reference proteome</keyword>
<keyword id="KW-0808">Transferase</keyword>
<keyword id="KW-0902">Two-component regulatory system</keyword>
<feature type="chain" id="PRO_0000433804" description="Probable histidine kinase 1">
    <location>
        <begin position="1"/>
        <end position="968"/>
    </location>
</feature>
<feature type="domain" description="Histidine kinase" evidence="3">
    <location>
        <begin position="372"/>
        <end position="655"/>
    </location>
</feature>
<feature type="domain" description="Response regulatory" evidence="4">
    <location>
        <begin position="818"/>
        <end position="965"/>
    </location>
</feature>
<feature type="region of interest" description="Disordered" evidence="5">
    <location>
        <begin position="737"/>
        <end position="757"/>
    </location>
</feature>
<feature type="coiled-coil region" evidence="2">
    <location>
        <begin position="89"/>
        <end position="120"/>
    </location>
</feature>
<feature type="coiled-coil region" evidence="2">
    <location>
        <begin position="169"/>
        <end position="204"/>
    </location>
</feature>
<feature type="compositionally biased region" description="Polar residues" evidence="5">
    <location>
        <begin position="738"/>
        <end position="754"/>
    </location>
</feature>
<feature type="modified residue" description="Phosphohistidine; by autocatalysis" evidence="3">
    <location>
        <position position="375"/>
    </location>
</feature>
<feature type="modified residue" description="4-aspartylphosphate" evidence="4">
    <location>
        <position position="867"/>
    </location>
</feature>
<name>OHK1_ORYSI</name>
<sequence>MGDEYLAEPEDEVAISMWPENIGDKHQKQFKMEKLGKDQDALEDANFQQKPSSVDLNRLMELANSEKGVSQMQYFVKHWEYKRANTARLLKEQIGLLCQQRKEIEQRKQQILEEQQFQDESYYAVKRQVPILDEVYKDEWKRPSKKNDDLSHNQELKIDAEYDSISYWKERAMQLEKTLEASLQRERSLEEKLEENIKNLQSHTPVEEFSGMLKRADYFLHLVLQSAPIVIAHQDADLRYRFIFNHFPTLADEDVIGKTDYEILSGEGIEEMNNVKKEVMASGKATKREFVFNTPLFGAKTFVTYIEPVFSKSGETIGVNYVAMDITDQVTRREKMADIRVREAVQKAKETELSKSLHITEETMRAKQMLATMSHEIRSPLSGVLSMAEILATTKLDKEQYQLLEVMLSSGDLVLQLINDILDLSKVESGAMKLEATTFRPREVVKHVLQTAAASLKKELILEGCIGDNVPLEVTGDVLRIRQILTNLISNAVKFTHEGKVGINLHVLDKQLPGCRIEGGQLHSKAHSAPAAAAEHFSASPRKCDNDTLGCSNHEDACQTGIPSNDNFGEHHEGDEVVWLRCDVYDTGIGIPEKSLPLLFKRYMQASDDHARKYGGTGLGLAICKQLVELMGGTLTVVSKENEGSTFSFVLPCKIPVKEDHSDDPDDMPSSGGDFTTSDIEGSFIFKPQARPYLLTSGVSVMNNTKLIGGNQFYDPPNILEDRKPFSNGFVLAEDHSTNSASTAHQSNGPSVSRTNKEQHDNAMVIELNRQAERVSSSRGDTTSVSGLIHEERGPCRVHEEKSLHKKSKCSPSSNKAKILLVEDNKVNIMVAKSMLEQLGHGIDIVNNGLEAIRAIQKRQYDIILMDVHMPEMDGLQATKFIRSFENTGCWDTSVKPEHDQIIAGSDNLSDCAHMKKQGKRVPIIAMTANSFSESAEECLAAGMDSYISKPVNFQNIKECLQQYLPPQ</sequence>
<accession>A2YFR6</accession>
<gene>
    <name evidence="6" type="primary">HK1</name>
    <name evidence="7" type="ORF">OsI_23953</name>
</gene>
<evidence type="ECO:0000250" key="1">
    <source>
        <dbReference type="UniProtKB" id="A1A698"/>
    </source>
</evidence>
<evidence type="ECO:0000255" key="2"/>
<evidence type="ECO:0000255" key="3">
    <source>
        <dbReference type="PROSITE-ProRule" id="PRU00107"/>
    </source>
</evidence>
<evidence type="ECO:0000255" key="4">
    <source>
        <dbReference type="PROSITE-ProRule" id="PRU00169"/>
    </source>
</evidence>
<evidence type="ECO:0000256" key="5">
    <source>
        <dbReference type="SAM" id="MobiDB-lite"/>
    </source>
</evidence>
<evidence type="ECO:0000305" key="6"/>
<evidence type="ECO:0000312" key="7">
    <source>
        <dbReference type="EMBL" id="EAZ01927.1"/>
    </source>
</evidence>
<proteinExistence type="inferred from homology"/>
<organism>
    <name type="scientific">Oryza sativa subsp. indica</name>
    <name type="common">Rice</name>
    <dbReference type="NCBI Taxonomy" id="39946"/>
    <lineage>
        <taxon>Eukaryota</taxon>
        <taxon>Viridiplantae</taxon>
        <taxon>Streptophyta</taxon>
        <taxon>Embryophyta</taxon>
        <taxon>Tracheophyta</taxon>
        <taxon>Spermatophyta</taxon>
        <taxon>Magnoliopsida</taxon>
        <taxon>Liliopsida</taxon>
        <taxon>Poales</taxon>
        <taxon>Poaceae</taxon>
        <taxon>BOP clade</taxon>
        <taxon>Oryzoideae</taxon>
        <taxon>Oryzeae</taxon>
        <taxon>Oryzinae</taxon>
        <taxon>Oryza</taxon>
        <taxon>Oryza sativa</taxon>
    </lineage>
</organism>